<organism>
    <name type="scientific">Geobacter sp. (strain M21)</name>
    <dbReference type="NCBI Taxonomy" id="443144"/>
    <lineage>
        <taxon>Bacteria</taxon>
        <taxon>Pseudomonadati</taxon>
        <taxon>Thermodesulfobacteriota</taxon>
        <taxon>Desulfuromonadia</taxon>
        <taxon>Geobacterales</taxon>
        <taxon>Geobacteraceae</taxon>
        <taxon>Geobacter</taxon>
    </lineage>
</organism>
<feature type="chain" id="PRO_1000213037" description="ATP synthase gamma chain">
    <location>
        <begin position="1"/>
        <end position="287"/>
    </location>
</feature>
<protein>
    <recommendedName>
        <fullName evidence="1">ATP synthase gamma chain</fullName>
    </recommendedName>
    <alternativeName>
        <fullName evidence="1">ATP synthase F1 sector gamma subunit</fullName>
    </alternativeName>
    <alternativeName>
        <fullName evidence="1">F-ATPase gamma subunit</fullName>
    </alternativeName>
</protein>
<evidence type="ECO:0000255" key="1">
    <source>
        <dbReference type="HAMAP-Rule" id="MF_00815"/>
    </source>
</evidence>
<gene>
    <name evidence="1" type="primary">atpG</name>
    <name type="ordered locus">GM21_4036</name>
</gene>
<sequence>MANLKSIKKRIVSVKNTRQITKAMKMVSAAKLRRAQENVVAARPYAGKLAEVLERLAKTQESDASPLMVKRDTRRALLVVVTSDRGLCGGFNANLSKAAERFINERKGEFSELSLMTIGRKGYEFLRNRHTVRKHHGNIFSTLSYQTAALIAAELVEGYLAEDYDEVYVIYNAFKSVMTQDITLEQLLPVTPKAGDDDEVGTEYIYEPSKAALLDELLPKHIEVQVFKSLLESVASEHGARMTAMDSASKNATEMIGKLTLIYNRARQAAITTELMEIISGSESIKG</sequence>
<comment type="function">
    <text evidence="1">Produces ATP from ADP in the presence of a proton gradient across the membrane. The gamma chain is believed to be important in regulating ATPase activity and the flow of protons through the CF(0) complex.</text>
</comment>
<comment type="subunit">
    <text evidence="1">F-type ATPases have 2 components, CF(1) - the catalytic core - and CF(0) - the membrane proton channel. CF(1) has five subunits: alpha(3), beta(3), gamma(1), delta(1), epsilon(1). CF(0) has three main subunits: a, b and c.</text>
</comment>
<comment type="subcellular location">
    <subcellularLocation>
        <location evidence="1">Cell inner membrane</location>
        <topology evidence="1">Peripheral membrane protein</topology>
    </subcellularLocation>
</comment>
<comment type="similarity">
    <text evidence="1">Belongs to the ATPase gamma chain family.</text>
</comment>
<dbReference type="EMBL" id="CP001661">
    <property type="protein sequence ID" value="ACT20052.1"/>
    <property type="molecule type" value="Genomic_DNA"/>
</dbReference>
<dbReference type="SMR" id="C6E9F2"/>
<dbReference type="STRING" id="443144.GM21_4036"/>
<dbReference type="KEGG" id="gem:GM21_4036"/>
<dbReference type="eggNOG" id="COG0224">
    <property type="taxonomic scope" value="Bacteria"/>
</dbReference>
<dbReference type="HOGENOM" id="CLU_050669_0_1_7"/>
<dbReference type="OrthoDB" id="9812769at2"/>
<dbReference type="GO" id="GO:0005886">
    <property type="term" value="C:plasma membrane"/>
    <property type="evidence" value="ECO:0007669"/>
    <property type="project" value="UniProtKB-SubCell"/>
</dbReference>
<dbReference type="GO" id="GO:0045259">
    <property type="term" value="C:proton-transporting ATP synthase complex"/>
    <property type="evidence" value="ECO:0007669"/>
    <property type="project" value="UniProtKB-KW"/>
</dbReference>
<dbReference type="GO" id="GO:0005524">
    <property type="term" value="F:ATP binding"/>
    <property type="evidence" value="ECO:0007669"/>
    <property type="project" value="UniProtKB-UniRule"/>
</dbReference>
<dbReference type="GO" id="GO:0046933">
    <property type="term" value="F:proton-transporting ATP synthase activity, rotational mechanism"/>
    <property type="evidence" value="ECO:0007669"/>
    <property type="project" value="UniProtKB-UniRule"/>
</dbReference>
<dbReference type="GO" id="GO:0042777">
    <property type="term" value="P:proton motive force-driven plasma membrane ATP synthesis"/>
    <property type="evidence" value="ECO:0007669"/>
    <property type="project" value="UniProtKB-UniRule"/>
</dbReference>
<dbReference type="CDD" id="cd12151">
    <property type="entry name" value="F1-ATPase_gamma"/>
    <property type="match status" value="1"/>
</dbReference>
<dbReference type="FunFam" id="1.10.287.80:FF:000001">
    <property type="entry name" value="ATP synthase gamma chain"/>
    <property type="match status" value="1"/>
</dbReference>
<dbReference type="FunFam" id="1.10.287.80:FF:000003">
    <property type="entry name" value="ATP synthase gamma chain, chloroplastic"/>
    <property type="match status" value="1"/>
</dbReference>
<dbReference type="Gene3D" id="3.40.1380.10">
    <property type="match status" value="1"/>
</dbReference>
<dbReference type="Gene3D" id="1.10.287.80">
    <property type="entry name" value="ATP synthase, gamma subunit, helix hairpin domain"/>
    <property type="match status" value="1"/>
</dbReference>
<dbReference type="HAMAP" id="MF_00815">
    <property type="entry name" value="ATP_synth_gamma_bact"/>
    <property type="match status" value="1"/>
</dbReference>
<dbReference type="InterPro" id="IPR035968">
    <property type="entry name" value="ATP_synth_F1_ATPase_gsu"/>
</dbReference>
<dbReference type="InterPro" id="IPR000131">
    <property type="entry name" value="ATP_synth_F1_gsu"/>
</dbReference>
<dbReference type="NCBIfam" id="TIGR01146">
    <property type="entry name" value="ATPsyn_F1gamma"/>
    <property type="match status" value="1"/>
</dbReference>
<dbReference type="PANTHER" id="PTHR11693">
    <property type="entry name" value="ATP SYNTHASE GAMMA CHAIN"/>
    <property type="match status" value="1"/>
</dbReference>
<dbReference type="PANTHER" id="PTHR11693:SF22">
    <property type="entry name" value="ATP SYNTHASE SUBUNIT GAMMA, MITOCHONDRIAL"/>
    <property type="match status" value="1"/>
</dbReference>
<dbReference type="Pfam" id="PF00231">
    <property type="entry name" value="ATP-synt"/>
    <property type="match status" value="1"/>
</dbReference>
<dbReference type="PIRSF" id="PIRSF039089">
    <property type="entry name" value="ATP_synthase_gamma"/>
    <property type="match status" value="1"/>
</dbReference>
<dbReference type="PRINTS" id="PR00126">
    <property type="entry name" value="ATPASEGAMMA"/>
</dbReference>
<dbReference type="SUPFAM" id="SSF52943">
    <property type="entry name" value="ATP synthase (F1-ATPase), gamma subunit"/>
    <property type="match status" value="1"/>
</dbReference>
<reference key="1">
    <citation type="submission" date="2009-07" db="EMBL/GenBank/DDBJ databases">
        <title>Complete sequence of Geobacter sp. M21.</title>
        <authorList>
            <consortium name="US DOE Joint Genome Institute"/>
            <person name="Lucas S."/>
            <person name="Copeland A."/>
            <person name="Lapidus A."/>
            <person name="Glavina del Rio T."/>
            <person name="Dalin E."/>
            <person name="Tice H."/>
            <person name="Bruce D."/>
            <person name="Goodwin L."/>
            <person name="Pitluck S."/>
            <person name="Saunders E."/>
            <person name="Brettin T."/>
            <person name="Detter J.C."/>
            <person name="Han C."/>
            <person name="Larimer F."/>
            <person name="Land M."/>
            <person name="Hauser L."/>
            <person name="Kyrpides N."/>
            <person name="Ovchinnikova G."/>
            <person name="Lovley D."/>
        </authorList>
    </citation>
    <scope>NUCLEOTIDE SEQUENCE [LARGE SCALE GENOMIC DNA]</scope>
    <source>
        <strain>M21</strain>
    </source>
</reference>
<accession>C6E9F2</accession>
<name>ATPG_GEOSM</name>
<proteinExistence type="inferred from homology"/>
<keyword id="KW-0066">ATP synthesis</keyword>
<keyword id="KW-0997">Cell inner membrane</keyword>
<keyword id="KW-1003">Cell membrane</keyword>
<keyword id="KW-0139">CF(1)</keyword>
<keyword id="KW-0375">Hydrogen ion transport</keyword>
<keyword id="KW-0406">Ion transport</keyword>
<keyword id="KW-0472">Membrane</keyword>
<keyword id="KW-0813">Transport</keyword>